<sequence length="144" mass="15757">MRLNTLSPANGARHSRKRLGRGIGSGFGKTSGRGHKGQKSRSGSSIRRGFEGGQMPLYRRLPKFGFNSRKKNITTEVRLSDLSNLSTNIIDLNVLKQENIIKKNIKYAKIILSGKLTVPLIIRGLLVSKGARSEIENTGGKVEG</sequence>
<gene>
    <name evidence="1" type="primary">rplO</name>
    <name type="ordered locus">BUAP5A_498</name>
</gene>
<name>RL15_BUCA5</name>
<organism>
    <name type="scientific">Buchnera aphidicola subsp. Acyrthosiphon pisum (strain 5A)</name>
    <dbReference type="NCBI Taxonomy" id="563178"/>
    <lineage>
        <taxon>Bacteria</taxon>
        <taxon>Pseudomonadati</taxon>
        <taxon>Pseudomonadota</taxon>
        <taxon>Gammaproteobacteria</taxon>
        <taxon>Enterobacterales</taxon>
        <taxon>Erwiniaceae</taxon>
        <taxon>Buchnera</taxon>
    </lineage>
</organism>
<feature type="chain" id="PRO_1000166279" description="Large ribosomal subunit protein uL15">
    <location>
        <begin position="1"/>
        <end position="144"/>
    </location>
</feature>
<feature type="region of interest" description="Disordered" evidence="2">
    <location>
        <begin position="1"/>
        <end position="52"/>
    </location>
</feature>
<feature type="compositionally biased region" description="Gly residues" evidence="2">
    <location>
        <begin position="21"/>
        <end position="31"/>
    </location>
</feature>
<evidence type="ECO:0000255" key="1">
    <source>
        <dbReference type="HAMAP-Rule" id="MF_01341"/>
    </source>
</evidence>
<evidence type="ECO:0000256" key="2">
    <source>
        <dbReference type="SAM" id="MobiDB-lite"/>
    </source>
</evidence>
<evidence type="ECO:0000305" key="3"/>
<protein>
    <recommendedName>
        <fullName evidence="1">Large ribosomal subunit protein uL15</fullName>
    </recommendedName>
    <alternativeName>
        <fullName evidence="3">50S ribosomal protein L15</fullName>
    </alternativeName>
</protein>
<dbReference type="EMBL" id="CP001161">
    <property type="protein sequence ID" value="ACL30849.1"/>
    <property type="molecule type" value="Genomic_DNA"/>
</dbReference>
<dbReference type="RefSeq" id="WP_009874456.1">
    <property type="nucleotide sequence ID" value="NC_011833.1"/>
</dbReference>
<dbReference type="SMR" id="B8D9S8"/>
<dbReference type="KEGG" id="bap:BUAP5A_498"/>
<dbReference type="HOGENOM" id="CLU_055188_4_2_6"/>
<dbReference type="OrthoDB" id="9810293at2"/>
<dbReference type="Proteomes" id="UP000006904">
    <property type="component" value="Chromosome"/>
</dbReference>
<dbReference type="GO" id="GO:0022625">
    <property type="term" value="C:cytosolic large ribosomal subunit"/>
    <property type="evidence" value="ECO:0007669"/>
    <property type="project" value="TreeGrafter"/>
</dbReference>
<dbReference type="GO" id="GO:0019843">
    <property type="term" value="F:rRNA binding"/>
    <property type="evidence" value="ECO:0007669"/>
    <property type="project" value="UniProtKB-UniRule"/>
</dbReference>
<dbReference type="GO" id="GO:0003735">
    <property type="term" value="F:structural constituent of ribosome"/>
    <property type="evidence" value="ECO:0007669"/>
    <property type="project" value="InterPro"/>
</dbReference>
<dbReference type="GO" id="GO:0006412">
    <property type="term" value="P:translation"/>
    <property type="evidence" value="ECO:0007669"/>
    <property type="project" value="UniProtKB-UniRule"/>
</dbReference>
<dbReference type="Gene3D" id="3.100.10.10">
    <property type="match status" value="1"/>
</dbReference>
<dbReference type="HAMAP" id="MF_01341">
    <property type="entry name" value="Ribosomal_uL15"/>
    <property type="match status" value="1"/>
</dbReference>
<dbReference type="InterPro" id="IPR030878">
    <property type="entry name" value="Ribosomal_uL15"/>
</dbReference>
<dbReference type="InterPro" id="IPR021131">
    <property type="entry name" value="Ribosomal_uL15/eL18"/>
</dbReference>
<dbReference type="InterPro" id="IPR036227">
    <property type="entry name" value="Ribosomal_uL15/eL18_sf"/>
</dbReference>
<dbReference type="InterPro" id="IPR005749">
    <property type="entry name" value="Ribosomal_uL15_bac-type"/>
</dbReference>
<dbReference type="InterPro" id="IPR001196">
    <property type="entry name" value="Ribosomal_uL15_CS"/>
</dbReference>
<dbReference type="NCBIfam" id="TIGR01071">
    <property type="entry name" value="rplO_bact"/>
    <property type="match status" value="1"/>
</dbReference>
<dbReference type="PANTHER" id="PTHR12934">
    <property type="entry name" value="50S RIBOSOMAL PROTEIN L15"/>
    <property type="match status" value="1"/>
</dbReference>
<dbReference type="PANTHER" id="PTHR12934:SF11">
    <property type="entry name" value="LARGE RIBOSOMAL SUBUNIT PROTEIN UL15M"/>
    <property type="match status" value="1"/>
</dbReference>
<dbReference type="Pfam" id="PF00828">
    <property type="entry name" value="Ribosomal_L27A"/>
    <property type="match status" value="1"/>
</dbReference>
<dbReference type="SUPFAM" id="SSF52080">
    <property type="entry name" value="Ribosomal proteins L15p and L18e"/>
    <property type="match status" value="1"/>
</dbReference>
<dbReference type="PROSITE" id="PS00475">
    <property type="entry name" value="RIBOSOMAL_L15"/>
    <property type="match status" value="1"/>
</dbReference>
<accession>B8D9S8</accession>
<comment type="function">
    <text evidence="1">Binds to the 23S rRNA.</text>
</comment>
<comment type="subunit">
    <text evidence="1">Part of the 50S ribosomal subunit.</text>
</comment>
<comment type="similarity">
    <text evidence="1">Belongs to the universal ribosomal protein uL15 family.</text>
</comment>
<reference key="1">
    <citation type="journal article" date="2009" name="Science">
        <title>The dynamics and time scale of ongoing genomic erosion in symbiotic bacteria.</title>
        <authorList>
            <person name="Moran N.A."/>
            <person name="McLaughlin H.J."/>
            <person name="Sorek R."/>
        </authorList>
    </citation>
    <scope>NUCLEOTIDE SEQUENCE [LARGE SCALE GENOMIC DNA]</scope>
    <source>
        <strain>5A</strain>
    </source>
</reference>
<proteinExistence type="inferred from homology"/>
<keyword id="KW-0687">Ribonucleoprotein</keyword>
<keyword id="KW-0689">Ribosomal protein</keyword>
<keyword id="KW-0694">RNA-binding</keyword>
<keyword id="KW-0699">rRNA-binding</keyword>